<feature type="signal peptide" evidence="2">
    <location>
        <begin position="1"/>
        <end position="20"/>
    </location>
</feature>
<feature type="chain" id="PRO_0000407539" description="Vacuolar protein sorting/targeting protein 10">
    <location>
        <begin position="21"/>
        <end position="1483"/>
    </location>
</feature>
<feature type="topological domain" description="Lumenal" evidence="2">
    <location>
        <begin position="21"/>
        <end position="1356"/>
    </location>
</feature>
<feature type="transmembrane region" description="Helical" evidence="2">
    <location>
        <begin position="1357"/>
        <end position="1377"/>
    </location>
</feature>
<feature type="topological domain" description="Cytoplasmic" evidence="2">
    <location>
        <begin position="1378"/>
        <end position="1405"/>
    </location>
</feature>
<feature type="transmembrane region" description="Helical" evidence="2">
    <location>
        <begin position="1406"/>
        <end position="1426"/>
    </location>
</feature>
<feature type="topological domain" description="Lumenal" evidence="2">
    <location>
        <begin position="1427"/>
        <end position="1483"/>
    </location>
</feature>
<feature type="repeat" description="BNR 1">
    <location>
        <begin position="58"/>
        <end position="67"/>
    </location>
</feature>
<feature type="repeat" description="BNR 2">
    <location>
        <begin position="103"/>
        <end position="113"/>
    </location>
</feature>
<feature type="repeat" description="BNR 3">
    <location>
        <begin position="375"/>
        <end position="385"/>
    </location>
</feature>
<feature type="repeat" description="BNR 4">
    <location>
        <begin position="436"/>
        <end position="447"/>
    </location>
</feature>
<feature type="repeat" description="BNR 5">
    <location>
        <begin position="478"/>
        <end position="487"/>
    </location>
</feature>
<feature type="repeat" description="BNR 6">
    <location>
        <begin position="718"/>
        <end position="728"/>
    </location>
</feature>
<feature type="repeat" description="BNR 7">
    <location>
        <begin position="817"/>
        <end position="826"/>
    </location>
</feature>
<feature type="repeat" description="BNR 8">
    <location>
        <begin position="1100"/>
        <end position="1110"/>
    </location>
</feature>
<feature type="repeat" description="BNR 9">
    <location>
        <begin position="1141"/>
        <end position="1151"/>
    </location>
</feature>
<feature type="glycosylation site" description="N-linked (GlcNAc...) asparagine" evidence="2">
    <location>
        <position position="295"/>
    </location>
</feature>
<feature type="glycosylation site" description="N-linked (GlcNAc...) asparagine" evidence="2">
    <location>
        <position position="966"/>
    </location>
</feature>
<feature type="glycosylation site" description="N-linked (GlcNAc...) asparagine" evidence="2">
    <location>
        <position position="1262"/>
    </location>
</feature>
<organism>
    <name type="scientific">Uncinocarpus reesii (strain UAMH 1704)</name>
    <dbReference type="NCBI Taxonomy" id="336963"/>
    <lineage>
        <taxon>Eukaryota</taxon>
        <taxon>Fungi</taxon>
        <taxon>Dikarya</taxon>
        <taxon>Ascomycota</taxon>
        <taxon>Pezizomycotina</taxon>
        <taxon>Eurotiomycetes</taxon>
        <taxon>Eurotiomycetidae</taxon>
        <taxon>Onygenales</taxon>
        <taxon>Onygenaceae</taxon>
        <taxon>Uncinocarpus</taxon>
    </lineage>
</organism>
<gene>
    <name type="primary">VPS10</name>
    <name type="ORF">UREG_01431</name>
</gene>
<reference key="1">
    <citation type="journal article" date="2009" name="Genome Res.">
        <title>Comparative genomic analyses of the human fungal pathogens Coccidioides and their relatives.</title>
        <authorList>
            <person name="Sharpton T.J."/>
            <person name="Stajich J.E."/>
            <person name="Rounsley S.D."/>
            <person name="Gardner M.J."/>
            <person name="Wortman J.R."/>
            <person name="Jordar V.S."/>
            <person name="Maiti R."/>
            <person name="Kodira C.D."/>
            <person name="Neafsey D.E."/>
            <person name="Zeng Q."/>
            <person name="Hung C.-Y."/>
            <person name="McMahan C."/>
            <person name="Muszewska A."/>
            <person name="Grynberg M."/>
            <person name="Mandel M.A."/>
            <person name="Kellner E.M."/>
            <person name="Barker B.M."/>
            <person name="Galgiani J.N."/>
            <person name="Orbach M.J."/>
            <person name="Kirkland T.N."/>
            <person name="Cole G.T."/>
            <person name="Henn M.R."/>
            <person name="Birren B.W."/>
            <person name="Taylor J.W."/>
        </authorList>
    </citation>
    <scope>NUCLEOTIDE SEQUENCE [LARGE SCALE GENOMIC DNA]</scope>
    <source>
        <strain>UAMH 1704</strain>
    </source>
</reference>
<protein>
    <recommendedName>
        <fullName>Vacuolar protein sorting/targeting protein 10</fullName>
    </recommendedName>
    <alternativeName>
        <fullName>Carboxypeptidase Y receptor</fullName>
        <shortName>CPY receptor</shortName>
    </alternativeName>
    <alternativeName>
        <fullName>Sortilin VPS10</fullName>
    </alternativeName>
    <alternativeName>
        <fullName>Vacuolar carboxypeptidase sorting receptor VPS10</fullName>
    </alternativeName>
</protein>
<sequence>MILRRLLLAGSLLLASLAAAKKEGPKITATKFDHEPRHLFYFEDTDTVVFQHKYDAHISTDAGQSWSVIKGPDDGMVGKVKSIYPHPHDRKKAYVFGQSRTHWVTEDAGKSWRAFKIEQDIPRSGNPLAFHGTDSDKLILHTIDCSGFVCDMPALYTTDGFKSHKTLTKSQHGCNWAITTPEFGTQADLPEKIDNRVFCIFSGLHAPMGRNKRLLYSDNFFEDDKGFEVPLNNGRPVSDVVRLAGVKKFLVAAAKSPRTTEMTLYVTDDATRWHQAMFDGHKLENDAYTVLESTNYSIQVGVKTTGGFNPMSALYTSNSEGIYFTRNAEHVNSNHLGYIDFEKIAGIQGIFLINTVSNWEEIDNNHQRKKKVVSQISFDDGRTFHDIKAGDKKLHLHSVAQLHNSGRVFSSPAPGVVMGVGNVGDHLKEYDEGDLYVSNDAGITWSKALEDAHKYEFGDLGSVLVAVYDEGRTNKVSYSIDHGKHWETAELPHKIRARVLTTTPDSTSLKFVLIGTSKSGSGVEHSVIGIDFSNLHERKCGKDDFERWPARLNEKNEPDCLMGHKQFYSRRKAGSECFIGSEFKDPVPELERCKCTEEDFECDFNFVRSKDRKDCVPARALPVPEGQCKKPDDKYTGSSGFRLIPGNDCVKDGGIELDKPKERPCSDAAKEPVSGEIDVTKHFFSANKPAEYYYLERPVLSKDKDETIVMLTDKLEVFITRDHGKTWKETLEGKHVVKLWPHTYINDAMYFITGEKRVIVTKNRGDSFREFETKLLPNRDRLPVLAFHPDPERSDWLIWTGADNCGRGGDCHSVAHYSTDGGDEWHTLMRYVGRCEFIGKERSRKTDELIFCAQHENENPKNRHLRLVSSDSWFKDKTVHYNNILDFRTMAEFIIVAARSEKDSLKVGASIDGKTFADAEFPANFDVKVQQAYTVLDSSTHSVWLHVTVHNVEDHQYGSIIKSNSNGTSYVLSLNNVNRNNADYVDFEKMEGLEGVALVNVVANVDEVQKGAAKQLRTMITHNDGAEWAYIRPPAKDADGRAYSCSPGKKGTEECGLHLHSFTERPDYRDTFSSPSAVGLMLAVGNVGDHLTLKSEGDTFITRDGGIEWHSVKKGNYIWEYGDQGSIIVIVPEAKPTKALFYTLDEGKTWTEFAFSEVEMLILDISTVPSDTSRNFLLWGKEVGSGSKPGFATVNIDFSGLKERSKECVLKEDKPEADDYYLWEPKHPLLEDNCLFGHITRYHRKKPEASCYNGGDFERLHNVSTNCECTRQDYECDYNFERQSDGSCALVPGHQPLDPKRICTEDSKAIEYFEPTGYRRIPLTTCEGGLKLDGFKAFPCPNKEKEFEKKHPRLHGAGLFFAIVLPIAAAGVVGYYVYTRWDGKFGRIRLGESGSSGDWLSRDSPLIAIPIAIIAGTVAVLSALPLLAASLWRSARGWTPIGRSSRPYSSRGAFAARRGDYVGVVEDEDELLGAEDFEEDEEV</sequence>
<evidence type="ECO:0000250" key="1"/>
<evidence type="ECO:0000255" key="2"/>
<evidence type="ECO:0000305" key="3"/>
<name>VPS10_UNCRE</name>
<dbReference type="EMBL" id="CH476615">
    <property type="protein sequence ID" value="EEP76582.1"/>
    <property type="molecule type" value="Genomic_DNA"/>
</dbReference>
<dbReference type="RefSeq" id="XP_002541915.1">
    <property type="nucleotide sequence ID" value="XM_002541869.1"/>
</dbReference>
<dbReference type="SMR" id="C4JI06"/>
<dbReference type="FunCoup" id="C4JI06">
    <property type="interactions" value="184"/>
</dbReference>
<dbReference type="STRING" id="336963.C4JI06"/>
<dbReference type="GlyCosmos" id="C4JI06">
    <property type="glycosylation" value="3 sites, No reported glycans"/>
</dbReference>
<dbReference type="GeneID" id="8440685"/>
<dbReference type="KEGG" id="ure:UREG_01431"/>
<dbReference type="VEuPathDB" id="FungiDB:UREG_01431"/>
<dbReference type="eggNOG" id="KOG3511">
    <property type="taxonomic scope" value="Eukaryota"/>
</dbReference>
<dbReference type="HOGENOM" id="CLU_000700_0_0_1"/>
<dbReference type="InParanoid" id="C4JI06"/>
<dbReference type="OMA" id="ATMSEFI"/>
<dbReference type="OrthoDB" id="443634at2759"/>
<dbReference type="Proteomes" id="UP000002058">
    <property type="component" value="Unassembled WGS sequence"/>
</dbReference>
<dbReference type="GO" id="GO:0005829">
    <property type="term" value="C:cytosol"/>
    <property type="evidence" value="ECO:0007669"/>
    <property type="project" value="GOC"/>
</dbReference>
<dbReference type="GO" id="GO:0005794">
    <property type="term" value="C:Golgi apparatus"/>
    <property type="evidence" value="ECO:0007669"/>
    <property type="project" value="UniProtKB-SubCell"/>
</dbReference>
<dbReference type="GO" id="GO:0016020">
    <property type="term" value="C:membrane"/>
    <property type="evidence" value="ECO:0007669"/>
    <property type="project" value="UniProtKB-KW"/>
</dbReference>
<dbReference type="GO" id="GO:0006895">
    <property type="term" value="P:Golgi to endosome transport"/>
    <property type="evidence" value="ECO:0007669"/>
    <property type="project" value="TreeGrafter"/>
</dbReference>
<dbReference type="GO" id="GO:0006896">
    <property type="term" value="P:Golgi to vacuole transport"/>
    <property type="evidence" value="ECO:0007669"/>
    <property type="project" value="TreeGrafter"/>
</dbReference>
<dbReference type="GO" id="GO:0006623">
    <property type="term" value="P:protein targeting to vacuole"/>
    <property type="evidence" value="ECO:0007669"/>
    <property type="project" value="TreeGrafter"/>
</dbReference>
<dbReference type="FunFam" id="3.30.60.270:FF:000005">
    <property type="entry name" value="Sortilin"/>
    <property type="match status" value="2"/>
</dbReference>
<dbReference type="FunFam" id="2.10.70.80:FF:000001">
    <property type="entry name" value="Sortilin-related VPS10 domain-containing receptor 1"/>
    <property type="match status" value="1"/>
</dbReference>
<dbReference type="Gene3D" id="2.10.70.80">
    <property type="match status" value="2"/>
</dbReference>
<dbReference type="Gene3D" id="3.30.60.270">
    <property type="match status" value="2"/>
</dbReference>
<dbReference type="Gene3D" id="2.130.10.10">
    <property type="entry name" value="YVTN repeat-like/Quinoprotein amine dehydrogenase"/>
    <property type="match status" value="2"/>
</dbReference>
<dbReference type="InterPro" id="IPR031777">
    <property type="entry name" value="Sortilin_C"/>
</dbReference>
<dbReference type="InterPro" id="IPR031778">
    <property type="entry name" value="Sortilin_N"/>
</dbReference>
<dbReference type="InterPro" id="IPR006581">
    <property type="entry name" value="VPS10"/>
</dbReference>
<dbReference type="InterPro" id="IPR050310">
    <property type="entry name" value="VPS10-sortilin"/>
</dbReference>
<dbReference type="InterPro" id="IPR015943">
    <property type="entry name" value="WD40/YVTN_repeat-like_dom_sf"/>
</dbReference>
<dbReference type="PANTHER" id="PTHR12106">
    <property type="entry name" value="SORTILIN RELATED"/>
    <property type="match status" value="1"/>
</dbReference>
<dbReference type="PANTHER" id="PTHR12106:SF27">
    <property type="entry name" value="SORTILIN-RELATED RECEPTOR"/>
    <property type="match status" value="1"/>
</dbReference>
<dbReference type="Pfam" id="PF15902">
    <property type="entry name" value="Sortilin-Vps10"/>
    <property type="match status" value="2"/>
</dbReference>
<dbReference type="Pfam" id="PF15901">
    <property type="entry name" value="Sortilin_C"/>
    <property type="match status" value="2"/>
</dbReference>
<dbReference type="SMART" id="SM00602">
    <property type="entry name" value="VPS10"/>
    <property type="match status" value="2"/>
</dbReference>
<dbReference type="SUPFAM" id="SSF110296">
    <property type="entry name" value="Oligoxyloglucan reducing end-specific cellobiohydrolase"/>
    <property type="match status" value="2"/>
</dbReference>
<proteinExistence type="inferred from homology"/>
<comment type="function">
    <text evidence="1">Functions as a sorting receptor in the Golgi compartment required for the intracellular sorting and delivery of soluble vacuolar proteins, like carboxypeptidase Y (CPY) and proteinase A. Executes multiple rounds of sorting by cycling between the late Golgi and a prevacuolar endosome-like compartment (By similarity).</text>
</comment>
<comment type="subcellular location">
    <subcellularLocation>
        <location evidence="1">Golgi apparatus</location>
        <location evidence="1">trans-Golgi network membrane</location>
        <topology evidence="1">Multi-pass membrane protein</topology>
    </subcellularLocation>
    <subcellularLocation>
        <location evidence="1">Prevacuolar compartment membrane</location>
        <topology evidence="1">Multi-pass membrane protein</topology>
    </subcellularLocation>
    <text evidence="1">Cycles between the Golgi apparatus and the prevacuolar compartment.</text>
</comment>
<comment type="similarity">
    <text evidence="3">Belongs to the VPS10-related sortilin family.</text>
</comment>
<keyword id="KW-0325">Glycoprotein</keyword>
<keyword id="KW-0333">Golgi apparatus</keyword>
<keyword id="KW-0472">Membrane</keyword>
<keyword id="KW-0653">Protein transport</keyword>
<keyword id="KW-0675">Receptor</keyword>
<keyword id="KW-1185">Reference proteome</keyword>
<keyword id="KW-0677">Repeat</keyword>
<keyword id="KW-0732">Signal</keyword>
<keyword id="KW-0812">Transmembrane</keyword>
<keyword id="KW-1133">Transmembrane helix</keyword>
<keyword id="KW-0813">Transport</keyword>
<accession>C4JI06</accession>